<proteinExistence type="evidence at protein level"/>
<accession>Q8DPM2</accession>
<name>GYRA_STRR6</name>
<protein>
    <recommendedName>
        <fullName evidence="1">DNA gyrase subunit A</fullName>
        <ecNumber evidence="1">5.6.2.2</ecNumber>
    </recommendedName>
</protein>
<reference key="1">
    <citation type="journal article" date="1998" name="J. Bacteriol.">
        <title>Molecular characterization of the gene encoding the DNA gyrase A subunit of Streptococcus pneumoniae.</title>
        <authorList>
            <person name="Balas D."/>
            <person name="Fernandez-Moreira E."/>
            <person name="de la Campa A.G."/>
        </authorList>
    </citation>
    <scope>NUCLEOTIDE SEQUENCE [GENOMIC DNA]</scope>
</reference>
<reference key="2">
    <citation type="journal article" date="2001" name="J. Bacteriol.">
        <title>Genome of the bacterium Streptococcus pneumoniae strain R6.</title>
        <authorList>
            <person name="Hoskins J."/>
            <person name="Alborn W.E. Jr."/>
            <person name="Arnold J."/>
            <person name="Blaszczak L.C."/>
            <person name="Burgett S."/>
            <person name="DeHoff B.S."/>
            <person name="Estrem S.T."/>
            <person name="Fritz L."/>
            <person name="Fu D.-J."/>
            <person name="Fuller W."/>
            <person name="Geringer C."/>
            <person name="Gilmour R."/>
            <person name="Glass J.S."/>
            <person name="Khoja H."/>
            <person name="Kraft A.R."/>
            <person name="Lagace R.E."/>
            <person name="LeBlanc D.J."/>
            <person name="Lee L.N."/>
            <person name="Lefkowitz E.J."/>
            <person name="Lu J."/>
            <person name="Matsushima P."/>
            <person name="McAhren S.M."/>
            <person name="McHenney M."/>
            <person name="McLeaster K."/>
            <person name="Mundy C.W."/>
            <person name="Nicas T.I."/>
            <person name="Norris F.H."/>
            <person name="O'Gara M."/>
            <person name="Peery R.B."/>
            <person name="Robertson G.T."/>
            <person name="Rockey P."/>
            <person name="Sun P.-M."/>
            <person name="Winkler M.E."/>
            <person name="Yang Y."/>
            <person name="Young-Bellido M."/>
            <person name="Zhao G."/>
            <person name="Zook C.A."/>
            <person name="Baltz R.H."/>
            <person name="Jaskunas S.R."/>
            <person name="Rosteck P.R. Jr."/>
            <person name="Skatrud P.L."/>
            <person name="Glass J.I."/>
        </authorList>
    </citation>
    <scope>NUCLEOTIDE SEQUENCE [LARGE SCALE GENOMIC DNA]</scope>
    <source>
        <strain>ATCC BAA-255 / R6</strain>
    </source>
</reference>
<reference key="3">
    <citation type="submission" date="1996-09" db="EMBL/GenBank/DDBJ databases">
        <authorList>
            <person name="Janoir C."/>
        </authorList>
    </citation>
    <scope>NUCLEOTIDE SEQUENCE [GENOMIC DNA] OF 44-145</scope>
</reference>
<comment type="function">
    <text evidence="1">A type II topoisomerase that negatively supercoils closed circular double-stranded (ds) DNA in an ATP-dependent manner to modulate DNA topology and maintain chromosomes in an underwound state. Negative supercoiling favors strand separation, and DNA replication, transcription, recombination and repair, all of which involve strand separation. Also able to catalyze the interconversion of other topological isomers of dsDNA rings, including catenanes and knotted rings. Type II topoisomerases break and join 2 DNA strands simultaneously in an ATP-dependent manner.</text>
</comment>
<comment type="catalytic activity">
    <reaction evidence="1">
        <text>ATP-dependent breakage, passage and rejoining of double-stranded DNA.</text>
        <dbReference type="EC" id="5.6.2.2"/>
    </reaction>
</comment>
<comment type="subunit">
    <text evidence="1">Heterotetramer, composed of two GyrA and two GyrB chains. In the heterotetramer, GyrA contains the active site tyrosine that forms a transient covalent intermediate with DNA, while GyrB binds cofactors and catalyzes ATP hydrolysis.</text>
</comment>
<comment type="subcellular location">
    <subcellularLocation>
        <location evidence="1">Cytoplasm</location>
    </subcellularLocation>
</comment>
<comment type="miscellaneous">
    <text evidence="1">Few gyrases are as efficient as E.coli at forming negative supercoils. Not all organisms have 2 type II topoisomerases; in organisms with a single type II topoisomerase this enzyme also has to decatenate newly replicated chromosomes.</text>
</comment>
<comment type="similarity">
    <text evidence="1">Belongs to the type II topoisomerase GyrA/ParC subunit family.</text>
</comment>
<keyword id="KW-0002">3D-structure</keyword>
<keyword id="KW-0067">ATP-binding</keyword>
<keyword id="KW-0963">Cytoplasm</keyword>
<keyword id="KW-0238">DNA-binding</keyword>
<keyword id="KW-0413">Isomerase</keyword>
<keyword id="KW-0547">Nucleotide-binding</keyword>
<keyword id="KW-1185">Reference proteome</keyword>
<keyword id="KW-0799">Topoisomerase</keyword>
<organism>
    <name type="scientific">Streptococcus pneumoniae (strain ATCC BAA-255 / R6)</name>
    <dbReference type="NCBI Taxonomy" id="171101"/>
    <lineage>
        <taxon>Bacteria</taxon>
        <taxon>Bacillati</taxon>
        <taxon>Bacillota</taxon>
        <taxon>Bacilli</taxon>
        <taxon>Lactobacillales</taxon>
        <taxon>Streptococcaceae</taxon>
        <taxon>Streptococcus</taxon>
    </lineage>
</organism>
<gene>
    <name evidence="1" type="primary">gyrA</name>
    <name type="ordered locus">spr1099</name>
</gene>
<dbReference type="EC" id="5.6.2.2" evidence="1"/>
<dbReference type="EMBL" id="AF053121">
    <property type="protein sequence ID" value="AAC23563.1"/>
    <property type="molecule type" value="Genomic_DNA"/>
</dbReference>
<dbReference type="EMBL" id="AE007317">
    <property type="protein sequence ID" value="AAK99902.1"/>
    <property type="molecule type" value="Genomic_DNA"/>
</dbReference>
<dbReference type="EMBL" id="Y07845">
    <property type="protein sequence ID" value="CAA69173.1"/>
    <property type="molecule type" value="Genomic_DNA"/>
</dbReference>
<dbReference type="PIR" id="B98009">
    <property type="entry name" value="B98009"/>
</dbReference>
<dbReference type="RefSeq" id="NP_358692.1">
    <property type="nucleotide sequence ID" value="NC_003098.1"/>
</dbReference>
<dbReference type="RefSeq" id="WP_001152994.1">
    <property type="nucleotide sequence ID" value="NC_003098.1"/>
</dbReference>
<dbReference type="PDB" id="4Z2C">
    <property type="method" value="X-ray"/>
    <property type="resolution" value="3.19 A"/>
    <property type="chains" value="A/B=1-493"/>
</dbReference>
<dbReference type="PDB" id="4Z2D">
    <property type="method" value="X-ray"/>
    <property type="resolution" value="3.38 A"/>
    <property type="chains" value="A/B=1-493"/>
</dbReference>
<dbReference type="PDB" id="4Z2E">
    <property type="method" value="X-ray"/>
    <property type="resolution" value="3.46 A"/>
    <property type="chains" value="A/B=1-493"/>
</dbReference>
<dbReference type="PDB" id="6N1P">
    <property type="method" value="EM"/>
    <property type="resolution" value="6.35 A"/>
    <property type="chains" value="A/B/C/D/E/F/G/H=1-487"/>
</dbReference>
<dbReference type="PDB" id="6N1Q">
    <property type="method" value="EM"/>
    <property type="resolution" value="5.16 A"/>
    <property type="chains" value="A/B/C/D/E/F/G/H=1-487"/>
</dbReference>
<dbReference type="PDB" id="6N1R">
    <property type="method" value="EM"/>
    <property type="resolution" value="4.00 A"/>
    <property type="chains" value="A/B/C/D/E/F/G/H/I/J/K/L=1-487"/>
</dbReference>
<dbReference type="PDBsum" id="4Z2C"/>
<dbReference type="PDBsum" id="4Z2D"/>
<dbReference type="PDBsum" id="4Z2E"/>
<dbReference type="PDBsum" id="6N1P"/>
<dbReference type="PDBsum" id="6N1Q"/>
<dbReference type="PDBsum" id="6N1R"/>
<dbReference type="SMR" id="Q8DPM2"/>
<dbReference type="STRING" id="171101.spr1099"/>
<dbReference type="KEGG" id="spr:spr1099"/>
<dbReference type="PATRIC" id="fig|171101.6.peg.1194"/>
<dbReference type="eggNOG" id="COG0188">
    <property type="taxonomic scope" value="Bacteria"/>
</dbReference>
<dbReference type="HOGENOM" id="CLU_002977_6_1_9"/>
<dbReference type="Proteomes" id="UP000000586">
    <property type="component" value="Chromosome"/>
</dbReference>
<dbReference type="GO" id="GO:0005694">
    <property type="term" value="C:chromosome"/>
    <property type="evidence" value="ECO:0007669"/>
    <property type="project" value="InterPro"/>
</dbReference>
<dbReference type="GO" id="GO:0005737">
    <property type="term" value="C:cytoplasm"/>
    <property type="evidence" value="ECO:0000318"/>
    <property type="project" value="GO_Central"/>
</dbReference>
<dbReference type="GO" id="GO:0009330">
    <property type="term" value="C:DNA topoisomerase type II (double strand cut, ATP-hydrolyzing) complex"/>
    <property type="evidence" value="ECO:0000318"/>
    <property type="project" value="GO_Central"/>
</dbReference>
<dbReference type="GO" id="GO:0005524">
    <property type="term" value="F:ATP binding"/>
    <property type="evidence" value="ECO:0000318"/>
    <property type="project" value="GO_Central"/>
</dbReference>
<dbReference type="GO" id="GO:0003677">
    <property type="term" value="F:DNA binding"/>
    <property type="evidence" value="ECO:0000318"/>
    <property type="project" value="GO_Central"/>
</dbReference>
<dbReference type="GO" id="GO:0034335">
    <property type="term" value="F:DNA negative supercoiling activity"/>
    <property type="evidence" value="ECO:0007669"/>
    <property type="project" value="UniProtKB-ARBA"/>
</dbReference>
<dbReference type="GO" id="GO:0006265">
    <property type="term" value="P:DNA topological change"/>
    <property type="evidence" value="ECO:0000318"/>
    <property type="project" value="GO_Central"/>
</dbReference>
<dbReference type="GO" id="GO:0006261">
    <property type="term" value="P:DNA-templated DNA replication"/>
    <property type="evidence" value="ECO:0007669"/>
    <property type="project" value="UniProtKB-UniRule"/>
</dbReference>
<dbReference type="CDD" id="cd00187">
    <property type="entry name" value="TOP4c"/>
    <property type="match status" value="1"/>
</dbReference>
<dbReference type="FunFam" id="1.10.268.10:FF:000001">
    <property type="entry name" value="DNA gyrase subunit A"/>
    <property type="match status" value="1"/>
</dbReference>
<dbReference type="FunFam" id="2.120.10.90:FF:000004">
    <property type="entry name" value="DNA gyrase subunit A"/>
    <property type="match status" value="1"/>
</dbReference>
<dbReference type="FunFam" id="3.30.1360.40:FF:000002">
    <property type="entry name" value="DNA gyrase subunit A"/>
    <property type="match status" value="1"/>
</dbReference>
<dbReference type="FunFam" id="3.90.199.10:FF:000001">
    <property type="entry name" value="DNA gyrase subunit A"/>
    <property type="match status" value="1"/>
</dbReference>
<dbReference type="Gene3D" id="3.30.1360.40">
    <property type="match status" value="1"/>
</dbReference>
<dbReference type="Gene3D" id="2.120.10.90">
    <property type="entry name" value="DNA gyrase/topoisomerase IV, subunit A, C-terminal"/>
    <property type="match status" value="1"/>
</dbReference>
<dbReference type="Gene3D" id="3.90.199.10">
    <property type="entry name" value="Topoisomerase II, domain 5"/>
    <property type="match status" value="1"/>
</dbReference>
<dbReference type="Gene3D" id="1.10.268.10">
    <property type="entry name" value="Topoisomerase, domain 3"/>
    <property type="match status" value="1"/>
</dbReference>
<dbReference type="HAMAP" id="MF_01897">
    <property type="entry name" value="GyrA"/>
    <property type="match status" value="1"/>
</dbReference>
<dbReference type="InterPro" id="IPR005743">
    <property type="entry name" value="GyrA"/>
</dbReference>
<dbReference type="InterPro" id="IPR006691">
    <property type="entry name" value="GyrA/parC_rep"/>
</dbReference>
<dbReference type="InterPro" id="IPR035516">
    <property type="entry name" value="Gyrase/topoIV_suA_C"/>
</dbReference>
<dbReference type="InterPro" id="IPR013760">
    <property type="entry name" value="Topo_IIA-like_dom_sf"/>
</dbReference>
<dbReference type="InterPro" id="IPR013758">
    <property type="entry name" value="Topo_IIA_A/C_ab"/>
</dbReference>
<dbReference type="InterPro" id="IPR013757">
    <property type="entry name" value="Topo_IIA_A_a_sf"/>
</dbReference>
<dbReference type="InterPro" id="IPR002205">
    <property type="entry name" value="Topo_IIA_dom_A"/>
</dbReference>
<dbReference type="InterPro" id="IPR050220">
    <property type="entry name" value="Type_II_DNA_Topoisomerases"/>
</dbReference>
<dbReference type="NCBIfam" id="TIGR01063">
    <property type="entry name" value="gyrA"/>
    <property type="match status" value="1"/>
</dbReference>
<dbReference type="NCBIfam" id="NF004043">
    <property type="entry name" value="PRK05560.1"/>
    <property type="match status" value="1"/>
</dbReference>
<dbReference type="NCBIfam" id="NF004044">
    <property type="entry name" value="PRK05561.1"/>
    <property type="match status" value="1"/>
</dbReference>
<dbReference type="PANTHER" id="PTHR43493:SF5">
    <property type="entry name" value="DNA GYRASE SUBUNIT A, CHLOROPLASTIC_MITOCHONDRIAL"/>
    <property type="match status" value="1"/>
</dbReference>
<dbReference type="PANTHER" id="PTHR43493">
    <property type="entry name" value="DNA GYRASE/TOPOISOMERASE SUBUNIT A"/>
    <property type="match status" value="1"/>
</dbReference>
<dbReference type="Pfam" id="PF03989">
    <property type="entry name" value="DNA_gyraseA_C"/>
    <property type="match status" value="6"/>
</dbReference>
<dbReference type="Pfam" id="PF00521">
    <property type="entry name" value="DNA_topoisoIV"/>
    <property type="match status" value="1"/>
</dbReference>
<dbReference type="SMART" id="SM00434">
    <property type="entry name" value="TOP4c"/>
    <property type="match status" value="1"/>
</dbReference>
<dbReference type="SUPFAM" id="SSF101904">
    <property type="entry name" value="GyrA/ParC C-terminal domain-like"/>
    <property type="match status" value="1"/>
</dbReference>
<dbReference type="SUPFAM" id="SSF56719">
    <property type="entry name" value="Type II DNA topoisomerase"/>
    <property type="match status" value="1"/>
</dbReference>
<dbReference type="PROSITE" id="PS52040">
    <property type="entry name" value="TOPO_IIA"/>
    <property type="match status" value="1"/>
</dbReference>
<sequence>MQDKNLVNVNLTKEMKASFIDYAMSVIVARALPDVRDGLKPVHRRILYGMNELGVTPDKPHKKSARITGDVMGKYHPHGDSSIYEAMVRMAQWWSYRYMLVDGHGNFGSMDGDSAAAQRYTEARMSKIALEMLRDINKNTVDFVDNYDANEREPLVLPARFPNLLVNGATGIAVGMATNIPPHNLGETIDAVKLVMDNPEVTTKDLMEVLPGPDFPTGALVMGKSGIHKAYETGKGSIVLRSRTEIETTKTGRERIVVTEFPYMVNKTKVHEHIVRLVQEKRIEGITAVRDESNREGVRFVIEVKRDASANVILNNLFKMTQMQTNFGFNMLAIQNGIPKILSLRQILDAYIEHQKEVVVRRTRFDKEKAEARAHILEGLLIALDHIDEVIRIIRASETDAEAQAELMSKFKLSERQSQAILDMRLRRLTGLERDKIQSEYDDLLALIADLADILAKPERVSQIIKDELDEVKRKFSDKRRTELMVGQVLSLEDEDLIEESDVLITLSNRGYIKRLDQDEFTAQKRGGRGVQGTGVKDDDFVRELVSTSTHDHLLFFTNKGRVYRLKGYEIPEYGRTAKGLPVVNLLKLDEDESIQTVINVESDRSDDAYLFFTTRHGIVKRTSVKEFANIRQNGLKALNLKDEDELINVLLAEGDMDIIIGTKFGYAVRFNQSAVRGMSRIATGVKGVNLREGDTVVGASLITDQDEVLIITEKGYGKRTVATEYPTKGRGGKGMQTAKITEKNGLLAGLMTVQGDEDLMIITDTGVMIRTNLANISQTGRATMGVKVMRLDQDAQIVTFTTVAVAEKEEVGTENETEGEA</sequence>
<evidence type="ECO:0000255" key="1">
    <source>
        <dbReference type="HAMAP-Rule" id="MF_01897"/>
    </source>
</evidence>
<evidence type="ECO:0000255" key="2">
    <source>
        <dbReference type="PROSITE-ProRule" id="PRU01384"/>
    </source>
</evidence>
<evidence type="ECO:0000305" key="3"/>
<evidence type="ECO:0007829" key="4">
    <source>
        <dbReference type="PDB" id="4Z2C"/>
    </source>
</evidence>
<evidence type="ECO:0007829" key="5">
    <source>
        <dbReference type="PDB" id="4Z2E"/>
    </source>
</evidence>
<feature type="chain" id="PRO_0000145263" description="DNA gyrase subunit A">
    <location>
        <begin position="1"/>
        <end position="822"/>
    </location>
</feature>
<feature type="domain" description="Topo IIA-type catalytic" evidence="2">
    <location>
        <begin position="32"/>
        <end position="497"/>
    </location>
</feature>
<feature type="short sequence motif" description="GyrA-box" evidence="1">
    <location>
        <begin position="524"/>
        <end position="530"/>
    </location>
</feature>
<feature type="active site" description="O-(5'-phospho-DNA)-tyrosine intermediate" evidence="1">
    <location>
        <position position="120"/>
    </location>
</feature>
<feature type="sequence conflict" description="In Ref. 1; AAC23563." evidence="3" ref="1">
    <original>K</original>
    <variation>E</variation>
    <location>
        <position position="537"/>
    </location>
</feature>
<feature type="sequence conflict" description="In Ref. 1; AAC23563." evidence="3" ref="1">
    <original>GIV</original>
    <variation>VLL</variation>
    <location>
        <begin position="618"/>
        <end position="620"/>
    </location>
</feature>
<feature type="strand" evidence="4">
    <location>
        <begin position="6"/>
        <end position="10"/>
    </location>
</feature>
<feature type="helix" evidence="4">
    <location>
        <begin position="11"/>
        <end position="29"/>
    </location>
</feature>
<feature type="turn" evidence="4">
    <location>
        <begin position="35"/>
        <end position="38"/>
    </location>
</feature>
<feature type="helix" evidence="4">
    <location>
        <begin position="41"/>
        <end position="53"/>
    </location>
</feature>
<feature type="strand" evidence="4">
    <location>
        <begin position="57"/>
        <end position="59"/>
    </location>
</feature>
<feature type="helix" evidence="4">
    <location>
        <begin position="64"/>
        <end position="74"/>
    </location>
</feature>
<feature type="helix" evidence="4">
    <location>
        <begin position="80"/>
        <end position="89"/>
    </location>
</feature>
<feature type="turn" evidence="4">
    <location>
        <begin position="93"/>
        <end position="95"/>
    </location>
</feature>
<feature type="strand" evidence="4">
    <location>
        <begin position="100"/>
        <end position="105"/>
    </location>
</feature>
<feature type="turn" evidence="4">
    <location>
        <begin position="118"/>
        <end position="120"/>
    </location>
</feature>
<feature type="strand" evidence="4">
    <location>
        <begin position="122"/>
        <end position="125"/>
    </location>
</feature>
<feature type="helix" evidence="4">
    <location>
        <begin position="129"/>
        <end position="133"/>
    </location>
</feature>
<feature type="turn" evidence="4">
    <location>
        <begin position="134"/>
        <end position="139"/>
    </location>
</feature>
<feature type="strand" evidence="4">
    <location>
        <begin position="143"/>
        <end position="145"/>
    </location>
</feature>
<feature type="strand" evidence="4">
    <location>
        <begin position="149"/>
        <end position="156"/>
    </location>
</feature>
<feature type="helix" evidence="4">
    <location>
        <begin position="163"/>
        <end position="167"/>
    </location>
</feature>
<feature type="strand" evidence="4">
    <location>
        <begin position="169"/>
        <end position="172"/>
    </location>
</feature>
<feature type="strand" evidence="4">
    <location>
        <begin position="177"/>
        <end position="180"/>
    </location>
</feature>
<feature type="helix" evidence="4">
    <location>
        <begin position="185"/>
        <end position="197"/>
    </location>
</feature>
<feature type="helix" evidence="4">
    <location>
        <begin position="203"/>
        <end position="207"/>
    </location>
</feature>
<feature type="strand" evidence="4">
    <location>
        <begin position="220"/>
        <end position="222"/>
    </location>
</feature>
<feature type="helix" evidence="4">
    <location>
        <begin position="225"/>
        <end position="233"/>
    </location>
</feature>
<feature type="strand" evidence="4">
    <location>
        <begin position="234"/>
        <end position="241"/>
    </location>
</feature>
<feature type="strand" evidence="4">
    <location>
        <begin position="243"/>
        <end position="248"/>
    </location>
</feature>
<feature type="strand" evidence="5">
    <location>
        <begin position="250"/>
        <end position="252"/>
    </location>
</feature>
<feature type="strand" evidence="4">
    <location>
        <begin position="254"/>
        <end position="260"/>
    </location>
</feature>
<feature type="helix" evidence="4">
    <location>
        <begin position="267"/>
        <end position="278"/>
    </location>
</feature>
<feature type="turn" evidence="4">
    <location>
        <begin position="279"/>
        <end position="281"/>
    </location>
</feature>
<feature type="strand" evidence="4">
    <location>
        <begin position="286"/>
        <end position="291"/>
    </location>
</feature>
<feature type="strand" evidence="4">
    <location>
        <begin position="300"/>
        <end position="304"/>
    </location>
</feature>
<feature type="helix" evidence="4">
    <location>
        <begin position="310"/>
        <end position="320"/>
    </location>
</feature>
<feature type="strand" evidence="4">
    <location>
        <begin position="324"/>
        <end position="330"/>
    </location>
</feature>
<feature type="strand" evidence="4">
    <location>
        <begin position="332"/>
        <end position="335"/>
    </location>
</feature>
<feature type="strand" evidence="4">
    <location>
        <begin position="338"/>
        <end position="341"/>
    </location>
</feature>
<feature type="helix" evidence="4">
    <location>
        <begin position="344"/>
        <end position="385"/>
    </location>
</feature>
<feature type="helix" evidence="4">
    <location>
        <begin position="387"/>
        <end position="395"/>
    </location>
</feature>
<feature type="helix" evidence="4">
    <location>
        <begin position="400"/>
        <end position="411"/>
    </location>
</feature>
<feature type="helix" evidence="4">
    <location>
        <begin position="415"/>
        <end position="422"/>
    </location>
</feature>
<feature type="helix" evidence="4">
    <location>
        <begin position="426"/>
        <end position="429"/>
    </location>
</feature>
<feature type="helix" evidence="4">
    <location>
        <begin position="433"/>
        <end position="456"/>
    </location>
</feature>
<feature type="helix" evidence="4">
    <location>
        <begin position="458"/>
        <end position="476"/>
    </location>
</feature>
<feature type="strand" evidence="4">
    <location>
        <begin position="482"/>
        <end position="485"/>
    </location>
</feature>